<dbReference type="EC" id="3.6.5.3" evidence="2"/>
<dbReference type="EMBL" id="CP000048">
    <property type="protein sequence ID" value="AAX16985.1"/>
    <property type="molecule type" value="Genomic_DNA"/>
</dbReference>
<dbReference type="RefSeq" id="WP_012422241.1">
    <property type="nucleotide sequence ID" value="NZ_CP073136.1"/>
</dbReference>
<dbReference type="SMR" id="B2S0H9"/>
<dbReference type="GeneID" id="71843294"/>
<dbReference type="KEGG" id="bhr:BH0476"/>
<dbReference type="HOGENOM" id="CLU_007265_0_0_12"/>
<dbReference type="Proteomes" id="UP000008834">
    <property type="component" value="Chromosome"/>
</dbReference>
<dbReference type="GO" id="GO:0005737">
    <property type="term" value="C:cytoplasm"/>
    <property type="evidence" value="ECO:0007669"/>
    <property type="project" value="UniProtKB-SubCell"/>
</dbReference>
<dbReference type="GO" id="GO:0005525">
    <property type="term" value="F:GTP binding"/>
    <property type="evidence" value="ECO:0007669"/>
    <property type="project" value="UniProtKB-UniRule"/>
</dbReference>
<dbReference type="GO" id="GO:0003924">
    <property type="term" value="F:GTPase activity"/>
    <property type="evidence" value="ECO:0007669"/>
    <property type="project" value="InterPro"/>
</dbReference>
<dbReference type="GO" id="GO:0003746">
    <property type="term" value="F:translation elongation factor activity"/>
    <property type="evidence" value="ECO:0007669"/>
    <property type="project" value="UniProtKB-UniRule"/>
</dbReference>
<dbReference type="CDD" id="cd01884">
    <property type="entry name" value="EF_Tu"/>
    <property type="match status" value="1"/>
</dbReference>
<dbReference type="CDD" id="cd03697">
    <property type="entry name" value="EFTU_II"/>
    <property type="match status" value="1"/>
</dbReference>
<dbReference type="CDD" id="cd03707">
    <property type="entry name" value="EFTU_III"/>
    <property type="match status" value="1"/>
</dbReference>
<dbReference type="FunFam" id="2.40.30.10:FF:000001">
    <property type="entry name" value="Elongation factor Tu"/>
    <property type="match status" value="1"/>
</dbReference>
<dbReference type="FunFam" id="3.40.50.300:FF:000576">
    <property type="entry name" value="Elongation factor Tu"/>
    <property type="match status" value="1"/>
</dbReference>
<dbReference type="Gene3D" id="3.40.50.300">
    <property type="entry name" value="P-loop containing nucleotide triphosphate hydrolases"/>
    <property type="match status" value="1"/>
</dbReference>
<dbReference type="Gene3D" id="2.40.30.10">
    <property type="entry name" value="Translation factors"/>
    <property type="match status" value="2"/>
</dbReference>
<dbReference type="HAMAP" id="MF_00118_B">
    <property type="entry name" value="EF_Tu_B"/>
    <property type="match status" value="1"/>
</dbReference>
<dbReference type="InterPro" id="IPR041709">
    <property type="entry name" value="EF-Tu_GTP-bd"/>
</dbReference>
<dbReference type="InterPro" id="IPR050055">
    <property type="entry name" value="EF-Tu_GTPase"/>
</dbReference>
<dbReference type="InterPro" id="IPR004161">
    <property type="entry name" value="EFTu-like_2"/>
</dbReference>
<dbReference type="InterPro" id="IPR033720">
    <property type="entry name" value="EFTU_2"/>
</dbReference>
<dbReference type="InterPro" id="IPR031157">
    <property type="entry name" value="G_TR_CS"/>
</dbReference>
<dbReference type="InterPro" id="IPR027417">
    <property type="entry name" value="P-loop_NTPase"/>
</dbReference>
<dbReference type="InterPro" id="IPR005225">
    <property type="entry name" value="Small_GTP-bd"/>
</dbReference>
<dbReference type="InterPro" id="IPR000795">
    <property type="entry name" value="T_Tr_GTP-bd_dom"/>
</dbReference>
<dbReference type="InterPro" id="IPR009000">
    <property type="entry name" value="Transl_B-barrel_sf"/>
</dbReference>
<dbReference type="InterPro" id="IPR009001">
    <property type="entry name" value="Transl_elong_EF1A/Init_IF2_C"/>
</dbReference>
<dbReference type="InterPro" id="IPR004541">
    <property type="entry name" value="Transl_elong_EFTu/EF1A_bac/org"/>
</dbReference>
<dbReference type="InterPro" id="IPR004160">
    <property type="entry name" value="Transl_elong_EFTu/EF1A_C"/>
</dbReference>
<dbReference type="NCBIfam" id="TIGR00485">
    <property type="entry name" value="EF-Tu"/>
    <property type="match status" value="1"/>
</dbReference>
<dbReference type="NCBIfam" id="NF000766">
    <property type="entry name" value="PRK00049.1"/>
    <property type="match status" value="1"/>
</dbReference>
<dbReference type="NCBIfam" id="NF009372">
    <property type="entry name" value="PRK12735.1"/>
    <property type="match status" value="1"/>
</dbReference>
<dbReference type="NCBIfam" id="NF009373">
    <property type="entry name" value="PRK12736.1"/>
    <property type="match status" value="1"/>
</dbReference>
<dbReference type="NCBIfam" id="TIGR00231">
    <property type="entry name" value="small_GTP"/>
    <property type="match status" value="1"/>
</dbReference>
<dbReference type="PANTHER" id="PTHR43721:SF22">
    <property type="entry name" value="ELONGATION FACTOR TU, MITOCHONDRIAL"/>
    <property type="match status" value="1"/>
</dbReference>
<dbReference type="PANTHER" id="PTHR43721">
    <property type="entry name" value="ELONGATION FACTOR TU-RELATED"/>
    <property type="match status" value="1"/>
</dbReference>
<dbReference type="Pfam" id="PF00009">
    <property type="entry name" value="GTP_EFTU"/>
    <property type="match status" value="1"/>
</dbReference>
<dbReference type="Pfam" id="PF03144">
    <property type="entry name" value="GTP_EFTU_D2"/>
    <property type="match status" value="1"/>
</dbReference>
<dbReference type="Pfam" id="PF03143">
    <property type="entry name" value="GTP_EFTU_D3"/>
    <property type="match status" value="1"/>
</dbReference>
<dbReference type="PRINTS" id="PR00315">
    <property type="entry name" value="ELONGATNFCT"/>
</dbReference>
<dbReference type="SUPFAM" id="SSF50465">
    <property type="entry name" value="EF-Tu/eEF-1alpha/eIF2-gamma C-terminal domain"/>
    <property type="match status" value="1"/>
</dbReference>
<dbReference type="SUPFAM" id="SSF52540">
    <property type="entry name" value="P-loop containing nucleoside triphosphate hydrolases"/>
    <property type="match status" value="1"/>
</dbReference>
<dbReference type="SUPFAM" id="SSF50447">
    <property type="entry name" value="Translation proteins"/>
    <property type="match status" value="1"/>
</dbReference>
<dbReference type="PROSITE" id="PS00301">
    <property type="entry name" value="G_TR_1"/>
    <property type="match status" value="1"/>
</dbReference>
<dbReference type="PROSITE" id="PS51722">
    <property type="entry name" value="G_TR_2"/>
    <property type="match status" value="1"/>
</dbReference>
<evidence type="ECO:0000250" key="1"/>
<evidence type="ECO:0000255" key="2">
    <source>
        <dbReference type="HAMAP-Rule" id="MF_00118"/>
    </source>
</evidence>
<organism>
    <name type="scientific">Borrelia hermsii (strain HS1 / DAH)</name>
    <dbReference type="NCBI Taxonomy" id="314723"/>
    <lineage>
        <taxon>Bacteria</taxon>
        <taxon>Pseudomonadati</taxon>
        <taxon>Spirochaetota</taxon>
        <taxon>Spirochaetia</taxon>
        <taxon>Spirochaetales</taxon>
        <taxon>Borreliaceae</taxon>
        <taxon>Borrelia</taxon>
    </lineage>
</organism>
<keyword id="KW-0963">Cytoplasm</keyword>
<keyword id="KW-0251">Elongation factor</keyword>
<keyword id="KW-0342">GTP-binding</keyword>
<keyword id="KW-0378">Hydrolase</keyword>
<keyword id="KW-0460">Magnesium</keyword>
<keyword id="KW-0479">Metal-binding</keyword>
<keyword id="KW-0547">Nucleotide-binding</keyword>
<keyword id="KW-0648">Protein biosynthesis</keyword>
<name>EFTU_BORHD</name>
<reference key="1">
    <citation type="submission" date="2004-12" db="EMBL/GenBank/DDBJ databases">
        <title>The genome sequence of Borrelia hermsii and Borrelia turicatae: comparative analysis of two agents of endemic N. America relapsing fever.</title>
        <authorList>
            <person name="Porcella S.F."/>
            <person name="Raffel S.J."/>
            <person name="Schrumpf M.E."/>
            <person name="Montgomery B."/>
            <person name="Smith T."/>
            <person name="Schwan T.G."/>
        </authorList>
    </citation>
    <scope>NUCLEOTIDE SEQUENCE [LARGE SCALE GENOMIC DNA]</scope>
    <source>
        <strain>HS1 / DAH</strain>
    </source>
</reference>
<comment type="function">
    <text evidence="2">GTP hydrolase that promotes the GTP-dependent binding of aminoacyl-tRNA to the A-site of ribosomes during protein biosynthesis.</text>
</comment>
<comment type="catalytic activity">
    <reaction evidence="2">
        <text>GTP + H2O = GDP + phosphate + H(+)</text>
        <dbReference type="Rhea" id="RHEA:19669"/>
        <dbReference type="ChEBI" id="CHEBI:15377"/>
        <dbReference type="ChEBI" id="CHEBI:15378"/>
        <dbReference type="ChEBI" id="CHEBI:37565"/>
        <dbReference type="ChEBI" id="CHEBI:43474"/>
        <dbReference type="ChEBI" id="CHEBI:58189"/>
        <dbReference type="EC" id="3.6.5.3"/>
    </reaction>
    <physiologicalReaction direction="left-to-right" evidence="2">
        <dbReference type="Rhea" id="RHEA:19670"/>
    </physiologicalReaction>
</comment>
<comment type="subunit">
    <text evidence="2">Monomer.</text>
</comment>
<comment type="subcellular location">
    <subcellularLocation>
        <location evidence="2">Cytoplasm</location>
    </subcellularLocation>
</comment>
<comment type="similarity">
    <text evidence="2">Belongs to the TRAFAC class translation factor GTPase superfamily. Classic translation factor GTPase family. EF-Tu/EF-1A subfamily.</text>
</comment>
<protein>
    <recommendedName>
        <fullName evidence="2">Elongation factor Tu</fullName>
        <shortName evidence="2">EF-Tu</shortName>
        <ecNumber evidence="2">3.6.5.3</ecNumber>
    </recommendedName>
</protein>
<accession>B2S0H9</accession>
<gene>
    <name evidence="2" type="primary">tuf</name>
    <name type="ordered locus">BH0476</name>
</gene>
<sequence length="394" mass="43360">MAKEVFQRTKPHMNVGTIGHVDHGKTTLTAAISIYCSKVNKDAKALKYEDIDNAPEEKARGITINARHIEYETAGRHYAHVDCPGHADYIKNMITGAAQMDAAILLVAADSGAEPQTKEHLLLAQRMGIKKIIVFLNKLDLADPELVELVEVEVLELVEKYGFPGDTPIVKGSAFGAMSNPDDPEATKCIKELLETMDSYFDLPERDIDKPFLLAIEDVFSISGRGTVATGRIERGIIKVGQEVEIVGIRETRKTTVTGVEMFQKILEQGEAGDNVGLLLRGVDKKDVERGQVIAAIGTITPHKKFKASIYCLTKEEGGRHKPFFSGYRPQFFFRTTDVTGMVSLEGKEMVMPGDNVDIVVELISLIAMDKNVEFAVREGGRTVASGRILEILE</sequence>
<feature type="chain" id="PRO_1000095052" description="Elongation factor Tu">
    <location>
        <begin position="1"/>
        <end position="394"/>
    </location>
</feature>
<feature type="domain" description="tr-type G">
    <location>
        <begin position="10"/>
        <end position="205"/>
    </location>
</feature>
<feature type="region of interest" description="G1" evidence="1">
    <location>
        <begin position="19"/>
        <end position="26"/>
    </location>
</feature>
<feature type="region of interest" description="G2" evidence="1">
    <location>
        <begin position="61"/>
        <end position="65"/>
    </location>
</feature>
<feature type="region of interest" description="G3" evidence="1">
    <location>
        <begin position="82"/>
        <end position="85"/>
    </location>
</feature>
<feature type="region of interest" description="G4" evidence="1">
    <location>
        <begin position="137"/>
        <end position="140"/>
    </location>
</feature>
<feature type="region of interest" description="G5" evidence="1">
    <location>
        <begin position="173"/>
        <end position="175"/>
    </location>
</feature>
<feature type="binding site" evidence="2">
    <location>
        <begin position="19"/>
        <end position="26"/>
    </location>
    <ligand>
        <name>GTP</name>
        <dbReference type="ChEBI" id="CHEBI:37565"/>
    </ligand>
</feature>
<feature type="binding site" evidence="2">
    <location>
        <position position="26"/>
    </location>
    <ligand>
        <name>Mg(2+)</name>
        <dbReference type="ChEBI" id="CHEBI:18420"/>
    </ligand>
</feature>
<feature type="binding site" evidence="2">
    <location>
        <begin position="82"/>
        <end position="86"/>
    </location>
    <ligand>
        <name>GTP</name>
        <dbReference type="ChEBI" id="CHEBI:37565"/>
    </ligand>
</feature>
<feature type="binding site" evidence="2">
    <location>
        <begin position="137"/>
        <end position="140"/>
    </location>
    <ligand>
        <name>GTP</name>
        <dbReference type="ChEBI" id="CHEBI:37565"/>
    </ligand>
</feature>
<proteinExistence type="inferred from homology"/>